<comment type="function">
    <text evidence="2">Catalyzes the dehydration of D-galactonate to 2-keto-3-deoxy-D-galactonate.</text>
</comment>
<comment type="catalytic activity">
    <reaction evidence="2">
        <text>D-galactonate = 2-dehydro-3-deoxy-D-galactonate + H2O</text>
        <dbReference type="Rhea" id="RHEA:18649"/>
        <dbReference type="ChEBI" id="CHEBI:12931"/>
        <dbReference type="ChEBI" id="CHEBI:15377"/>
        <dbReference type="ChEBI" id="CHEBI:57989"/>
        <dbReference type="EC" id="4.2.1.6"/>
    </reaction>
</comment>
<comment type="cofactor">
    <cofactor evidence="2">
        <name>Mg(2+)</name>
        <dbReference type="ChEBI" id="CHEBI:18420"/>
    </cofactor>
    <text evidence="2">Binds 1 Mg(2+) ion per subunit.</text>
</comment>
<comment type="pathway">
    <text evidence="2">Carbohydrate acid metabolism; D-galactonate degradation; D-glyceraldehyde 3-phosphate and pyruvate from D-galactonate: step 1/3.</text>
</comment>
<comment type="miscellaneous">
    <text evidence="2">Reaction proceeds via an anti dehydration.</text>
</comment>
<comment type="similarity">
    <text evidence="2">Belongs to the mandelate racemase/muconate lactonizing enzyme family. GalD subfamily.</text>
</comment>
<evidence type="ECO:0000250" key="1"/>
<evidence type="ECO:0000255" key="2">
    <source>
        <dbReference type="HAMAP-Rule" id="MF_01289"/>
    </source>
</evidence>
<sequence length="382" mass="42553">MKITKITTYRLPPRWMFLKIETDEGVVGWGEPVIEGRARTVEAAVHELSDYLIGQDPSRINDLWQVMYRAGFYRGGPILMSAIAGIDQALWDIKGKVLNAPVWQLMGGLVRDKIKAYSWVGGDRPADVIDGIKTLREIGFDTFKLNGCEELGLIDNSRAVDAAVNTVAQIREAFGNQIEFGLDFHGRVSAPMAKVLIKELEPYRPLFIEEPVLAEQAEYYPKLAAQTHIPLAAGERMFSRFDFKRVLEAGGISILQPDLSHAGGITECYKIAGMAEAYDVTLAPHCPLGPIALAACLHIDFVSYNAVLQEQSMGIHYNKGAELLDFVKNKEDFSMVGGFFKPLTKPGLGVEIDEAKVIEFSKNAPDWRNPLWRHEDNSVAEW</sequence>
<feature type="chain" id="PRO_0000352628" description="D-galactonate dehydratase">
    <location>
        <begin position="1"/>
        <end position="382"/>
    </location>
</feature>
<feature type="active site" description="Proton donor" evidence="1">
    <location>
        <position position="185"/>
    </location>
</feature>
<feature type="active site" description="Proton acceptor" evidence="1">
    <location>
        <position position="285"/>
    </location>
</feature>
<feature type="binding site" evidence="2">
    <location>
        <position position="183"/>
    </location>
    <ligand>
        <name>Mg(2+)</name>
        <dbReference type="ChEBI" id="CHEBI:18420"/>
    </ligand>
</feature>
<feature type="binding site" evidence="2">
    <location>
        <position position="209"/>
    </location>
    <ligand>
        <name>Mg(2+)</name>
        <dbReference type="ChEBI" id="CHEBI:18420"/>
    </ligand>
</feature>
<feature type="binding site" evidence="2">
    <location>
        <position position="235"/>
    </location>
    <ligand>
        <name>Mg(2+)</name>
        <dbReference type="ChEBI" id="CHEBI:18420"/>
    </ligand>
</feature>
<feature type="site" description="Increases basicity of active site His" evidence="2">
    <location>
        <position position="258"/>
    </location>
</feature>
<feature type="site" description="Transition state stabilizer" evidence="2">
    <location>
        <position position="310"/>
    </location>
</feature>
<organism>
    <name type="scientific">Escherichia coli O1:K1 / APEC</name>
    <dbReference type="NCBI Taxonomy" id="405955"/>
    <lineage>
        <taxon>Bacteria</taxon>
        <taxon>Pseudomonadati</taxon>
        <taxon>Pseudomonadota</taxon>
        <taxon>Gammaproteobacteria</taxon>
        <taxon>Enterobacterales</taxon>
        <taxon>Enterobacteriaceae</taxon>
        <taxon>Escherichia</taxon>
    </lineage>
</organism>
<name>DGOD_ECOK1</name>
<accession>A1AHM7</accession>
<proteinExistence type="inferred from homology"/>
<gene>
    <name evidence="2" type="primary">dgoD</name>
    <name type="ordered locus">Ecok1_36730</name>
    <name type="ORF">APECO1_2765</name>
</gene>
<protein>
    <recommendedName>
        <fullName evidence="2">D-galactonate dehydratase</fullName>
        <shortName evidence="2">GalD</shortName>
        <ecNumber evidence="2">4.2.1.6</ecNumber>
    </recommendedName>
</protein>
<keyword id="KW-0456">Lyase</keyword>
<keyword id="KW-0460">Magnesium</keyword>
<keyword id="KW-0479">Metal-binding</keyword>
<keyword id="KW-1185">Reference proteome</keyword>
<dbReference type="EC" id="4.2.1.6" evidence="2"/>
<dbReference type="EMBL" id="CP000468">
    <property type="protein sequence ID" value="ABJ03167.1"/>
    <property type="molecule type" value="Genomic_DNA"/>
</dbReference>
<dbReference type="RefSeq" id="WP_000705012.1">
    <property type="nucleotide sequence ID" value="NZ_CADILS010000011.1"/>
</dbReference>
<dbReference type="SMR" id="A1AHM7"/>
<dbReference type="GeneID" id="89518589"/>
<dbReference type="KEGG" id="ecv:APECO1_2765"/>
<dbReference type="HOGENOM" id="CLU_030273_3_2_6"/>
<dbReference type="UniPathway" id="UPA00081">
    <property type="reaction ID" value="UER00518"/>
</dbReference>
<dbReference type="Proteomes" id="UP000008216">
    <property type="component" value="Chromosome"/>
</dbReference>
<dbReference type="GO" id="GO:0008869">
    <property type="term" value="F:galactonate dehydratase activity"/>
    <property type="evidence" value="ECO:0007669"/>
    <property type="project" value="UniProtKB-UniRule"/>
</dbReference>
<dbReference type="GO" id="GO:0000287">
    <property type="term" value="F:magnesium ion binding"/>
    <property type="evidence" value="ECO:0007669"/>
    <property type="project" value="UniProtKB-UniRule"/>
</dbReference>
<dbReference type="GO" id="GO:0009063">
    <property type="term" value="P:amino acid catabolic process"/>
    <property type="evidence" value="ECO:0007669"/>
    <property type="project" value="InterPro"/>
</dbReference>
<dbReference type="GO" id="GO:0034194">
    <property type="term" value="P:D-galactonate catabolic process"/>
    <property type="evidence" value="ECO:0007669"/>
    <property type="project" value="UniProtKB-UniRule"/>
</dbReference>
<dbReference type="CDD" id="cd03325">
    <property type="entry name" value="D-galactonate_dehydratase"/>
    <property type="match status" value="1"/>
</dbReference>
<dbReference type="FunFam" id="3.20.20.120:FF:000008">
    <property type="entry name" value="D-galactonate dehydratase"/>
    <property type="match status" value="1"/>
</dbReference>
<dbReference type="FunFam" id="3.30.390.10:FF:000003">
    <property type="entry name" value="D-galactonate dehydratase"/>
    <property type="match status" value="1"/>
</dbReference>
<dbReference type="Gene3D" id="3.20.20.120">
    <property type="entry name" value="Enolase-like C-terminal domain"/>
    <property type="match status" value="1"/>
</dbReference>
<dbReference type="Gene3D" id="3.30.390.10">
    <property type="entry name" value="Enolase-like, N-terminal domain"/>
    <property type="match status" value="1"/>
</dbReference>
<dbReference type="HAMAP" id="MF_01289">
    <property type="entry name" value="Galacton_dehydrat"/>
    <property type="match status" value="1"/>
</dbReference>
<dbReference type="InterPro" id="IPR034593">
    <property type="entry name" value="DgoD-like"/>
</dbReference>
<dbReference type="InterPro" id="IPR036849">
    <property type="entry name" value="Enolase-like_C_sf"/>
</dbReference>
<dbReference type="InterPro" id="IPR029017">
    <property type="entry name" value="Enolase-like_N"/>
</dbReference>
<dbReference type="InterPro" id="IPR029065">
    <property type="entry name" value="Enolase_C-like"/>
</dbReference>
<dbReference type="InterPro" id="IPR023592">
    <property type="entry name" value="Galactonate_deHydtase"/>
</dbReference>
<dbReference type="InterPro" id="IPR018110">
    <property type="entry name" value="Mandel_Rmase/mucon_lact_enz_CS"/>
</dbReference>
<dbReference type="InterPro" id="IPR013342">
    <property type="entry name" value="Mandelate_racemase_C"/>
</dbReference>
<dbReference type="InterPro" id="IPR013341">
    <property type="entry name" value="Mandelate_racemase_N_dom"/>
</dbReference>
<dbReference type="NCBIfam" id="NF010624">
    <property type="entry name" value="PRK14017.1"/>
    <property type="match status" value="1"/>
</dbReference>
<dbReference type="PANTHER" id="PTHR48080:SF2">
    <property type="entry name" value="D-GALACTONATE DEHYDRATASE"/>
    <property type="match status" value="1"/>
</dbReference>
<dbReference type="PANTHER" id="PTHR48080">
    <property type="entry name" value="D-GALACTONATE DEHYDRATASE-RELATED"/>
    <property type="match status" value="1"/>
</dbReference>
<dbReference type="Pfam" id="PF13378">
    <property type="entry name" value="MR_MLE_C"/>
    <property type="match status" value="1"/>
</dbReference>
<dbReference type="Pfam" id="PF02746">
    <property type="entry name" value="MR_MLE_N"/>
    <property type="match status" value="1"/>
</dbReference>
<dbReference type="SFLD" id="SFLDF00003">
    <property type="entry name" value="D-galactonate_dehydratase"/>
    <property type="match status" value="1"/>
</dbReference>
<dbReference type="SFLD" id="SFLDG00179">
    <property type="entry name" value="mandelate_racemase"/>
    <property type="match status" value="1"/>
</dbReference>
<dbReference type="SMART" id="SM00922">
    <property type="entry name" value="MR_MLE"/>
    <property type="match status" value="1"/>
</dbReference>
<dbReference type="SUPFAM" id="SSF51604">
    <property type="entry name" value="Enolase C-terminal domain-like"/>
    <property type="match status" value="1"/>
</dbReference>
<dbReference type="SUPFAM" id="SSF54826">
    <property type="entry name" value="Enolase N-terminal domain-like"/>
    <property type="match status" value="1"/>
</dbReference>
<dbReference type="PROSITE" id="PS00908">
    <property type="entry name" value="MR_MLE_1"/>
    <property type="match status" value="1"/>
</dbReference>
<dbReference type="PROSITE" id="PS00909">
    <property type="entry name" value="MR_MLE_2"/>
    <property type="match status" value="1"/>
</dbReference>
<reference key="1">
    <citation type="journal article" date="2007" name="J. Bacteriol.">
        <title>The genome sequence of avian pathogenic Escherichia coli strain O1:K1:H7 shares strong similarities with human extraintestinal pathogenic E. coli genomes.</title>
        <authorList>
            <person name="Johnson T.J."/>
            <person name="Kariyawasam S."/>
            <person name="Wannemuehler Y."/>
            <person name="Mangiamele P."/>
            <person name="Johnson S.J."/>
            <person name="Doetkott C."/>
            <person name="Skyberg J.A."/>
            <person name="Lynne A.M."/>
            <person name="Johnson J.R."/>
            <person name="Nolan L.K."/>
        </authorList>
    </citation>
    <scope>NUCLEOTIDE SEQUENCE [LARGE SCALE GENOMIC DNA]</scope>
</reference>